<sequence length="106" mass="12459">MSPLSEYALRMSRLSARIFGEVARSTDSKSMKVVSLFSEQPLAKKKETYDWYPNHNTYFALMGNLRFLGLYRDEHQDFKDEQRRLKKLRGKGKPRKGEGKRATKKK</sequence>
<protein>
    <recommendedName>
        <fullName evidence="4">Small ribosomal subunit protein mS33</fullName>
    </recommendedName>
    <alternativeName>
        <fullName>28S ribosomal protein S33, mitochondrial</fullName>
        <shortName>MRP-S33</shortName>
        <shortName>S33mt</shortName>
    </alternativeName>
    <alternativeName>
        <fullName>Ganglioside-induced differentiation-associated-protein 3</fullName>
    </alternativeName>
</protein>
<accession>Q9D2R8</accession>
<accession>O88743</accession>
<feature type="initiator methionine" description="Removed" evidence="2">
    <location>
        <position position="1"/>
    </location>
</feature>
<feature type="chain" id="PRO_0000087728" description="Small ribosomal subunit protein mS33">
    <location>
        <begin position="2"/>
        <end position="106"/>
    </location>
</feature>
<feature type="region of interest" description="Disordered" evidence="3">
    <location>
        <begin position="81"/>
        <end position="106"/>
    </location>
</feature>
<feature type="compositionally biased region" description="Basic residues" evidence="3">
    <location>
        <begin position="84"/>
        <end position="94"/>
    </location>
</feature>
<feature type="compositionally biased region" description="Basic and acidic residues" evidence="3">
    <location>
        <begin position="95"/>
        <end position="106"/>
    </location>
</feature>
<feature type="modified residue" description="N-acetylserine" evidence="2">
    <location>
        <position position="2"/>
    </location>
</feature>
<feature type="sequence conflict" description="In Ref. 1; CAA76895." evidence="4" ref="1">
    <original>R</original>
    <variation>L</variation>
    <location>
        <position position="13"/>
    </location>
</feature>
<feature type="sequence conflict" description="In Ref. 1; CAA76895." evidence="4" ref="1">
    <original>K</original>
    <variation>R</variation>
    <location>
        <position position="96"/>
    </location>
</feature>
<comment type="subunit">
    <text evidence="1">Component of the mitochondrial ribosome small subunit (28S) which comprises a 12S rRNA and about 30 distinct proteins.</text>
</comment>
<comment type="subcellular location">
    <subcellularLocation>
        <location evidence="2">Mitochondrion</location>
    </subcellularLocation>
</comment>
<comment type="similarity">
    <text evidence="4">Belongs to the mitochondrion-specific ribosomal protein mS33 family.</text>
</comment>
<comment type="sequence caution" evidence="4">
    <conflict type="erroneous initiation">
        <sequence resource="EMBL-CDS" id="CAA76895"/>
    </conflict>
</comment>
<reference key="1">
    <citation type="journal article" date="1999" name="J. Neurochem.">
        <title>Isolation of 10 differentially expressed cDNAs in differentiated Neuro2a cells induced through controlled expression of the GD3 synthase gene.</title>
        <authorList>
            <person name="Liu H."/>
            <person name="Nakagawa T."/>
            <person name="Kanematsu T."/>
            <person name="Uchida T."/>
            <person name="Tsuji S."/>
        </authorList>
    </citation>
    <scope>NUCLEOTIDE SEQUENCE [MRNA]</scope>
    <source>
        <strain>ICR</strain>
        <tissue>Brain</tissue>
    </source>
</reference>
<reference key="2">
    <citation type="journal article" date="2005" name="Science">
        <title>The transcriptional landscape of the mammalian genome.</title>
        <authorList>
            <person name="Carninci P."/>
            <person name="Kasukawa T."/>
            <person name="Katayama S."/>
            <person name="Gough J."/>
            <person name="Frith M.C."/>
            <person name="Maeda N."/>
            <person name="Oyama R."/>
            <person name="Ravasi T."/>
            <person name="Lenhard B."/>
            <person name="Wells C."/>
            <person name="Kodzius R."/>
            <person name="Shimokawa K."/>
            <person name="Bajic V.B."/>
            <person name="Brenner S.E."/>
            <person name="Batalov S."/>
            <person name="Forrest A.R."/>
            <person name="Zavolan M."/>
            <person name="Davis M.J."/>
            <person name="Wilming L.G."/>
            <person name="Aidinis V."/>
            <person name="Allen J.E."/>
            <person name="Ambesi-Impiombato A."/>
            <person name="Apweiler R."/>
            <person name="Aturaliya R.N."/>
            <person name="Bailey T.L."/>
            <person name="Bansal M."/>
            <person name="Baxter L."/>
            <person name="Beisel K.W."/>
            <person name="Bersano T."/>
            <person name="Bono H."/>
            <person name="Chalk A.M."/>
            <person name="Chiu K.P."/>
            <person name="Choudhary V."/>
            <person name="Christoffels A."/>
            <person name="Clutterbuck D.R."/>
            <person name="Crowe M.L."/>
            <person name="Dalla E."/>
            <person name="Dalrymple B.P."/>
            <person name="de Bono B."/>
            <person name="Della Gatta G."/>
            <person name="di Bernardo D."/>
            <person name="Down T."/>
            <person name="Engstrom P."/>
            <person name="Fagiolini M."/>
            <person name="Faulkner G."/>
            <person name="Fletcher C.F."/>
            <person name="Fukushima T."/>
            <person name="Furuno M."/>
            <person name="Futaki S."/>
            <person name="Gariboldi M."/>
            <person name="Georgii-Hemming P."/>
            <person name="Gingeras T.R."/>
            <person name="Gojobori T."/>
            <person name="Green R.E."/>
            <person name="Gustincich S."/>
            <person name="Harbers M."/>
            <person name="Hayashi Y."/>
            <person name="Hensch T.K."/>
            <person name="Hirokawa N."/>
            <person name="Hill D."/>
            <person name="Huminiecki L."/>
            <person name="Iacono M."/>
            <person name="Ikeo K."/>
            <person name="Iwama A."/>
            <person name="Ishikawa T."/>
            <person name="Jakt M."/>
            <person name="Kanapin A."/>
            <person name="Katoh M."/>
            <person name="Kawasawa Y."/>
            <person name="Kelso J."/>
            <person name="Kitamura H."/>
            <person name="Kitano H."/>
            <person name="Kollias G."/>
            <person name="Krishnan S.P."/>
            <person name="Kruger A."/>
            <person name="Kummerfeld S.K."/>
            <person name="Kurochkin I.V."/>
            <person name="Lareau L.F."/>
            <person name="Lazarevic D."/>
            <person name="Lipovich L."/>
            <person name="Liu J."/>
            <person name="Liuni S."/>
            <person name="McWilliam S."/>
            <person name="Madan Babu M."/>
            <person name="Madera M."/>
            <person name="Marchionni L."/>
            <person name="Matsuda H."/>
            <person name="Matsuzawa S."/>
            <person name="Miki H."/>
            <person name="Mignone F."/>
            <person name="Miyake S."/>
            <person name="Morris K."/>
            <person name="Mottagui-Tabar S."/>
            <person name="Mulder N."/>
            <person name="Nakano N."/>
            <person name="Nakauchi H."/>
            <person name="Ng P."/>
            <person name="Nilsson R."/>
            <person name="Nishiguchi S."/>
            <person name="Nishikawa S."/>
            <person name="Nori F."/>
            <person name="Ohara O."/>
            <person name="Okazaki Y."/>
            <person name="Orlando V."/>
            <person name="Pang K.C."/>
            <person name="Pavan W.J."/>
            <person name="Pavesi G."/>
            <person name="Pesole G."/>
            <person name="Petrovsky N."/>
            <person name="Piazza S."/>
            <person name="Reed J."/>
            <person name="Reid J.F."/>
            <person name="Ring B.Z."/>
            <person name="Ringwald M."/>
            <person name="Rost B."/>
            <person name="Ruan Y."/>
            <person name="Salzberg S.L."/>
            <person name="Sandelin A."/>
            <person name="Schneider C."/>
            <person name="Schoenbach C."/>
            <person name="Sekiguchi K."/>
            <person name="Semple C.A."/>
            <person name="Seno S."/>
            <person name="Sessa L."/>
            <person name="Sheng Y."/>
            <person name="Shibata Y."/>
            <person name="Shimada H."/>
            <person name="Shimada K."/>
            <person name="Silva D."/>
            <person name="Sinclair B."/>
            <person name="Sperling S."/>
            <person name="Stupka E."/>
            <person name="Sugiura K."/>
            <person name="Sultana R."/>
            <person name="Takenaka Y."/>
            <person name="Taki K."/>
            <person name="Tammoja K."/>
            <person name="Tan S.L."/>
            <person name="Tang S."/>
            <person name="Taylor M.S."/>
            <person name="Tegner J."/>
            <person name="Teichmann S.A."/>
            <person name="Ueda H.R."/>
            <person name="van Nimwegen E."/>
            <person name="Verardo R."/>
            <person name="Wei C.L."/>
            <person name="Yagi K."/>
            <person name="Yamanishi H."/>
            <person name="Zabarovsky E."/>
            <person name="Zhu S."/>
            <person name="Zimmer A."/>
            <person name="Hide W."/>
            <person name="Bult C."/>
            <person name="Grimmond S.M."/>
            <person name="Teasdale R.D."/>
            <person name="Liu E.T."/>
            <person name="Brusic V."/>
            <person name="Quackenbush J."/>
            <person name="Wahlestedt C."/>
            <person name="Mattick J.S."/>
            <person name="Hume D.A."/>
            <person name="Kai C."/>
            <person name="Sasaki D."/>
            <person name="Tomaru Y."/>
            <person name="Fukuda S."/>
            <person name="Kanamori-Katayama M."/>
            <person name="Suzuki M."/>
            <person name="Aoki J."/>
            <person name="Arakawa T."/>
            <person name="Iida J."/>
            <person name="Imamura K."/>
            <person name="Itoh M."/>
            <person name="Kato T."/>
            <person name="Kawaji H."/>
            <person name="Kawagashira N."/>
            <person name="Kawashima T."/>
            <person name="Kojima M."/>
            <person name="Kondo S."/>
            <person name="Konno H."/>
            <person name="Nakano K."/>
            <person name="Ninomiya N."/>
            <person name="Nishio T."/>
            <person name="Okada M."/>
            <person name="Plessy C."/>
            <person name="Shibata K."/>
            <person name="Shiraki T."/>
            <person name="Suzuki S."/>
            <person name="Tagami M."/>
            <person name="Waki K."/>
            <person name="Watahiki A."/>
            <person name="Okamura-Oho Y."/>
            <person name="Suzuki H."/>
            <person name="Kawai J."/>
            <person name="Hayashizaki Y."/>
        </authorList>
    </citation>
    <scope>NUCLEOTIDE SEQUENCE [LARGE SCALE MRNA]</scope>
    <source>
        <strain>C57BL/6J</strain>
        <tissue>Pancreas</tissue>
    </source>
</reference>
<reference key="3">
    <citation type="journal article" date="2010" name="Cell">
        <title>A tissue-specific atlas of mouse protein phosphorylation and expression.</title>
        <authorList>
            <person name="Huttlin E.L."/>
            <person name="Jedrychowski M.P."/>
            <person name="Elias J.E."/>
            <person name="Goswami T."/>
            <person name="Rad R."/>
            <person name="Beausoleil S.A."/>
            <person name="Villen J."/>
            <person name="Haas W."/>
            <person name="Sowa M.E."/>
            <person name="Gygi S.P."/>
        </authorList>
    </citation>
    <scope>IDENTIFICATION BY MASS SPECTROMETRY [LARGE SCALE ANALYSIS]</scope>
    <source>
        <tissue>Brain</tissue>
        <tissue>Brown adipose tissue</tissue>
        <tissue>Heart</tissue>
        <tissue>Kidney</tissue>
    </source>
</reference>
<evidence type="ECO:0000250" key="1">
    <source>
        <dbReference type="UniProtKB" id="P82926"/>
    </source>
</evidence>
<evidence type="ECO:0000250" key="2">
    <source>
        <dbReference type="UniProtKB" id="Q9Y291"/>
    </source>
</evidence>
<evidence type="ECO:0000256" key="3">
    <source>
        <dbReference type="SAM" id="MobiDB-lite"/>
    </source>
</evidence>
<evidence type="ECO:0000305" key="4"/>
<proteinExistence type="evidence at protein level"/>
<organism>
    <name type="scientific">Mus musculus</name>
    <name type="common">Mouse</name>
    <dbReference type="NCBI Taxonomy" id="10090"/>
    <lineage>
        <taxon>Eukaryota</taxon>
        <taxon>Metazoa</taxon>
        <taxon>Chordata</taxon>
        <taxon>Craniata</taxon>
        <taxon>Vertebrata</taxon>
        <taxon>Euteleostomi</taxon>
        <taxon>Mammalia</taxon>
        <taxon>Eutheria</taxon>
        <taxon>Euarchontoglires</taxon>
        <taxon>Glires</taxon>
        <taxon>Rodentia</taxon>
        <taxon>Myomorpha</taxon>
        <taxon>Muroidea</taxon>
        <taxon>Muridae</taxon>
        <taxon>Murinae</taxon>
        <taxon>Mus</taxon>
        <taxon>Mus</taxon>
    </lineage>
</organism>
<gene>
    <name type="primary">Mrps33</name>
    <name type="synonym">Gdap3</name>
</gene>
<name>RT33_MOUSE</name>
<dbReference type="EMBL" id="Y17852">
    <property type="protein sequence ID" value="CAA76895.1"/>
    <property type="status" value="ALT_INIT"/>
    <property type="molecule type" value="mRNA"/>
</dbReference>
<dbReference type="EMBL" id="AK019000">
    <property type="protein sequence ID" value="BAB31503.1"/>
    <property type="molecule type" value="mRNA"/>
</dbReference>
<dbReference type="CCDS" id="CCDS20026.1"/>
<dbReference type="RefSeq" id="NP_034400.1">
    <property type="nucleotide sequence ID" value="NM_010270.2"/>
</dbReference>
<dbReference type="PDB" id="7PNT">
    <property type="method" value="EM"/>
    <property type="resolution" value="3.19 A"/>
    <property type="chains" value="Z=1-106"/>
</dbReference>
<dbReference type="PDB" id="7PNU">
    <property type="method" value="EM"/>
    <property type="resolution" value="3.06 A"/>
    <property type="chains" value="Z=1-106"/>
</dbReference>
<dbReference type="PDB" id="7PNV">
    <property type="method" value="EM"/>
    <property type="resolution" value="3.06 A"/>
    <property type="chains" value="Z=1-106"/>
</dbReference>
<dbReference type="PDB" id="7PNW">
    <property type="method" value="EM"/>
    <property type="resolution" value="3.09 A"/>
    <property type="chains" value="Z=1-106"/>
</dbReference>
<dbReference type="PDBsum" id="7PNT"/>
<dbReference type="PDBsum" id="7PNU"/>
<dbReference type="PDBsum" id="7PNV"/>
<dbReference type="PDBsum" id="7PNW"/>
<dbReference type="EMDB" id="EMD-13551"/>
<dbReference type="EMDB" id="EMD-13552"/>
<dbReference type="EMDB" id="EMD-13553"/>
<dbReference type="EMDB" id="EMD-13554"/>
<dbReference type="SMR" id="Q9D2R8"/>
<dbReference type="ComplexPortal" id="CPX-5301">
    <property type="entry name" value="28S mitochondrial small ribosomal subunit"/>
</dbReference>
<dbReference type="FunCoup" id="Q9D2R8">
    <property type="interactions" value="980"/>
</dbReference>
<dbReference type="STRING" id="10090.ENSMUSP00000031978"/>
<dbReference type="GlyGen" id="Q9D2R8">
    <property type="glycosylation" value="1 site, 1 O-linked glycan (1 site)"/>
</dbReference>
<dbReference type="iPTMnet" id="Q9D2R8"/>
<dbReference type="PhosphoSitePlus" id="Q9D2R8"/>
<dbReference type="PaxDb" id="10090-ENSMUSP00000031978"/>
<dbReference type="ProteomicsDB" id="260943"/>
<dbReference type="Pumba" id="Q9D2R8"/>
<dbReference type="Antibodypedia" id="32470">
    <property type="antibodies" value="112 antibodies from 21 providers"/>
</dbReference>
<dbReference type="DNASU" id="14548"/>
<dbReference type="Ensembl" id="ENSMUST00000031978.9">
    <property type="protein sequence ID" value="ENSMUSP00000031978.9"/>
    <property type="gene ID" value="ENSMUSG00000029918.10"/>
</dbReference>
<dbReference type="GeneID" id="14548"/>
<dbReference type="KEGG" id="mmu:14548"/>
<dbReference type="UCSC" id="uc009bmi.2">
    <property type="organism name" value="mouse"/>
</dbReference>
<dbReference type="AGR" id="MGI:1338046"/>
<dbReference type="CTD" id="51650"/>
<dbReference type="MGI" id="MGI:1338046">
    <property type="gene designation" value="Mrps33"/>
</dbReference>
<dbReference type="VEuPathDB" id="HostDB:ENSMUSG00000029918"/>
<dbReference type="eggNOG" id="KOG4104">
    <property type="taxonomic scope" value="Eukaryota"/>
</dbReference>
<dbReference type="GeneTree" id="ENSGT00390000011401"/>
<dbReference type="HOGENOM" id="CLU_162208_2_0_1"/>
<dbReference type="InParanoid" id="Q9D2R8"/>
<dbReference type="OMA" id="YSGLMWR"/>
<dbReference type="OrthoDB" id="5980584at2759"/>
<dbReference type="PhylomeDB" id="Q9D2R8"/>
<dbReference type="TreeFam" id="TF313928"/>
<dbReference type="Reactome" id="R-MMU-5389840">
    <property type="pathway name" value="Mitochondrial translation elongation"/>
</dbReference>
<dbReference type="Reactome" id="R-MMU-5419276">
    <property type="pathway name" value="Mitochondrial translation termination"/>
</dbReference>
<dbReference type="BioGRID-ORCS" id="14548">
    <property type="hits" value="14 hits in 80 CRISPR screens"/>
</dbReference>
<dbReference type="ChiTaRS" id="Mrps33">
    <property type="organism name" value="mouse"/>
</dbReference>
<dbReference type="PRO" id="PR:Q9D2R8"/>
<dbReference type="Proteomes" id="UP000000589">
    <property type="component" value="Chromosome 6"/>
</dbReference>
<dbReference type="RNAct" id="Q9D2R8">
    <property type="molecule type" value="protein"/>
</dbReference>
<dbReference type="Bgee" id="ENSMUSG00000029918">
    <property type="expression patterns" value="Expressed in primary oocyte and 67 other cell types or tissues"/>
</dbReference>
<dbReference type="ExpressionAtlas" id="Q9D2R8">
    <property type="expression patterns" value="baseline and differential"/>
</dbReference>
<dbReference type="GO" id="GO:0005743">
    <property type="term" value="C:mitochondrial inner membrane"/>
    <property type="evidence" value="ECO:0000303"/>
    <property type="project" value="ComplexPortal"/>
</dbReference>
<dbReference type="GO" id="GO:0005763">
    <property type="term" value="C:mitochondrial small ribosomal subunit"/>
    <property type="evidence" value="ECO:0000250"/>
    <property type="project" value="UniProtKB"/>
</dbReference>
<dbReference type="GO" id="GO:0005739">
    <property type="term" value="C:mitochondrion"/>
    <property type="evidence" value="ECO:0007005"/>
    <property type="project" value="MGI"/>
</dbReference>
<dbReference type="GO" id="GO:0032543">
    <property type="term" value="P:mitochondrial translation"/>
    <property type="evidence" value="ECO:0000303"/>
    <property type="project" value="ComplexPortal"/>
</dbReference>
<dbReference type="InterPro" id="IPR013219">
    <property type="entry name" value="Ribosomal_mS33"/>
</dbReference>
<dbReference type="PANTHER" id="PTHR13362">
    <property type="entry name" value="MITOCHONDRIAL RIBOSOMAL PROTEIN S33"/>
    <property type="match status" value="1"/>
</dbReference>
<dbReference type="PANTHER" id="PTHR13362:SF2">
    <property type="entry name" value="SMALL RIBOSOMAL SUBUNIT PROTEIN MS33"/>
    <property type="match status" value="1"/>
</dbReference>
<dbReference type="Pfam" id="PF08293">
    <property type="entry name" value="MRP-S33"/>
    <property type="match status" value="1"/>
</dbReference>
<keyword id="KW-0002">3D-structure</keyword>
<keyword id="KW-0007">Acetylation</keyword>
<keyword id="KW-0496">Mitochondrion</keyword>
<keyword id="KW-1185">Reference proteome</keyword>
<keyword id="KW-0687">Ribonucleoprotein</keyword>
<keyword id="KW-0689">Ribosomal protein</keyword>